<name>PELO_METMA</name>
<dbReference type="EC" id="3.1.-.-" evidence="1"/>
<dbReference type="EMBL" id="AE008384">
    <property type="protein sequence ID" value="AAM31511.1"/>
    <property type="molecule type" value="Genomic_DNA"/>
</dbReference>
<dbReference type="RefSeq" id="WP_011033752.1">
    <property type="nucleotide sequence ID" value="NC_003901.1"/>
</dbReference>
<dbReference type="SMR" id="Q8PVZ0"/>
<dbReference type="KEGG" id="mma:MM_1815"/>
<dbReference type="PATRIC" id="fig|192952.21.peg.2100"/>
<dbReference type="eggNOG" id="arCOG01741">
    <property type="taxonomic scope" value="Archaea"/>
</dbReference>
<dbReference type="HOGENOM" id="CLU_023334_0_0_2"/>
<dbReference type="Proteomes" id="UP000000595">
    <property type="component" value="Chromosome"/>
</dbReference>
<dbReference type="GO" id="GO:0005737">
    <property type="term" value="C:cytoplasm"/>
    <property type="evidence" value="ECO:0007669"/>
    <property type="project" value="UniProtKB-SubCell"/>
</dbReference>
<dbReference type="GO" id="GO:0004519">
    <property type="term" value="F:endonuclease activity"/>
    <property type="evidence" value="ECO:0007669"/>
    <property type="project" value="UniProtKB-UniRule"/>
</dbReference>
<dbReference type="GO" id="GO:0046872">
    <property type="term" value="F:metal ion binding"/>
    <property type="evidence" value="ECO:0007669"/>
    <property type="project" value="UniProtKB-UniRule"/>
</dbReference>
<dbReference type="GO" id="GO:0070651">
    <property type="term" value="P:nonfunctional rRNA decay"/>
    <property type="evidence" value="ECO:0007669"/>
    <property type="project" value="TreeGrafter"/>
</dbReference>
<dbReference type="GO" id="GO:0070966">
    <property type="term" value="P:nuclear-transcribed mRNA catabolic process, no-go decay"/>
    <property type="evidence" value="ECO:0007669"/>
    <property type="project" value="InterPro"/>
</dbReference>
<dbReference type="GO" id="GO:0070481">
    <property type="term" value="P:nuclear-transcribed mRNA catabolic process, non-stop decay"/>
    <property type="evidence" value="ECO:0007669"/>
    <property type="project" value="InterPro"/>
</dbReference>
<dbReference type="GO" id="GO:0032790">
    <property type="term" value="P:ribosome disassembly"/>
    <property type="evidence" value="ECO:0007669"/>
    <property type="project" value="TreeGrafter"/>
</dbReference>
<dbReference type="GO" id="GO:0071025">
    <property type="term" value="P:RNA surveillance"/>
    <property type="evidence" value="ECO:0007669"/>
    <property type="project" value="InterPro"/>
</dbReference>
<dbReference type="FunFam" id="2.30.30.870:FF:000002">
    <property type="entry name" value="Protein pelota homolog"/>
    <property type="match status" value="1"/>
</dbReference>
<dbReference type="FunFam" id="3.30.1330.30:FF:000059">
    <property type="entry name" value="Protein pelota homolog"/>
    <property type="match status" value="1"/>
</dbReference>
<dbReference type="Gene3D" id="3.30.1330.30">
    <property type="match status" value="1"/>
</dbReference>
<dbReference type="Gene3D" id="3.30.420.60">
    <property type="entry name" value="eRF1 domain 2"/>
    <property type="match status" value="1"/>
</dbReference>
<dbReference type="Gene3D" id="2.30.30.870">
    <property type="entry name" value="Pelota, domain A"/>
    <property type="match status" value="1"/>
</dbReference>
<dbReference type="HAMAP" id="MF_01853">
    <property type="entry name" value="PelO"/>
    <property type="match status" value="1"/>
</dbReference>
<dbReference type="InterPro" id="IPR042226">
    <property type="entry name" value="eFR1_2_sf"/>
</dbReference>
<dbReference type="InterPro" id="IPR005140">
    <property type="entry name" value="eRF1_1_Pelota"/>
</dbReference>
<dbReference type="InterPro" id="IPR005141">
    <property type="entry name" value="eRF1_2"/>
</dbReference>
<dbReference type="InterPro" id="IPR005142">
    <property type="entry name" value="eRF1_3"/>
</dbReference>
<dbReference type="InterPro" id="IPR038069">
    <property type="entry name" value="Pelota/DOM34_N"/>
</dbReference>
<dbReference type="InterPro" id="IPR023521">
    <property type="entry name" value="Pelota_arc"/>
</dbReference>
<dbReference type="InterPro" id="IPR029064">
    <property type="entry name" value="Ribosomal_eL30-like_sf"/>
</dbReference>
<dbReference type="InterPro" id="IPR004405">
    <property type="entry name" value="Transl-rel_pelota"/>
</dbReference>
<dbReference type="NCBIfam" id="TIGR00111">
    <property type="entry name" value="pelota"/>
    <property type="match status" value="1"/>
</dbReference>
<dbReference type="PANTHER" id="PTHR10853">
    <property type="entry name" value="PELOTA"/>
    <property type="match status" value="1"/>
</dbReference>
<dbReference type="PANTHER" id="PTHR10853:SF0">
    <property type="entry name" value="PROTEIN PELOTA HOMOLOG"/>
    <property type="match status" value="1"/>
</dbReference>
<dbReference type="Pfam" id="PF03463">
    <property type="entry name" value="eRF1_1"/>
    <property type="match status" value="1"/>
</dbReference>
<dbReference type="Pfam" id="PF03464">
    <property type="entry name" value="eRF1_2"/>
    <property type="match status" value="1"/>
</dbReference>
<dbReference type="Pfam" id="PF03465">
    <property type="entry name" value="eRF1_3"/>
    <property type="match status" value="1"/>
</dbReference>
<dbReference type="SMART" id="SM01194">
    <property type="entry name" value="eRF1_1"/>
    <property type="match status" value="1"/>
</dbReference>
<dbReference type="SUPFAM" id="SSF159065">
    <property type="entry name" value="Dom34/Pelota N-terminal domain-like"/>
    <property type="match status" value="1"/>
</dbReference>
<dbReference type="SUPFAM" id="SSF55315">
    <property type="entry name" value="L30e-like"/>
    <property type="match status" value="1"/>
</dbReference>
<dbReference type="SUPFAM" id="SSF53137">
    <property type="entry name" value="Translational machinery components"/>
    <property type="match status" value="1"/>
</dbReference>
<reference key="1">
    <citation type="journal article" date="2002" name="J. Mol. Microbiol. Biotechnol.">
        <title>The genome of Methanosarcina mazei: evidence for lateral gene transfer between Bacteria and Archaea.</title>
        <authorList>
            <person name="Deppenmeier U."/>
            <person name="Johann A."/>
            <person name="Hartsch T."/>
            <person name="Merkl R."/>
            <person name="Schmitz R.A."/>
            <person name="Martinez-Arias R."/>
            <person name="Henne A."/>
            <person name="Wiezer A."/>
            <person name="Baeumer S."/>
            <person name="Jacobi C."/>
            <person name="Brueggemann H."/>
            <person name="Lienard T."/>
            <person name="Christmann A."/>
            <person name="Boemecke M."/>
            <person name="Steckel S."/>
            <person name="Bhattacharyya A."/>
            <person name="Lykidis A."/>
            <person name="Overbeek R."/>
            <person name="Klenk H.-P."/>
            <person name="Gunsalus R.P."/>
            <person name="Fritz H.-J."/>
            <person name="Gottschalk G."/>
        </authorList>
    </citation>
    <scope>NUCLEOTIDE SEQUENCE [LARGE SCALE GENOMIC DNA]</scope>
    <source>
        <strain>ATCC BAA-159 / DSM 3647 / Goe1 / Go1 / JCM 11833 / OCM 88</strain>
    </source>
</reference>
<protein>
    <recommendedName>
        <fullName evidence="1">Protein pelota homolog</fullName>
        <ecNumber evidence="1">3.1.-.-</ecNumber>
    </recommendedName>
</protein>
<sequence length="350" mass="39446">MRVTNRSLKGREGEIAVTAETLDDLWHLKYIIEKGDMVFALTRRKADSASDKLRPEKVEKVKVRLGIRVEELEFHKFANRLRIHGPIEHGMDTGSYHTLNVEIGTNISIIKEHWKNDQLQRIQDAEEAGKRPKVVIVAVEEGDADIGFVRHYGIEVYSHIRQSSGKRETGLRNEFFREIVEQLRHAVPEDASIVIAGPGFTKEDFLKYFNETESEMASKALTEDTSMIGMSGFQEVLRRGAVDRIMQESRIARESSLMEDLIREISMDGKAAYGFADVKNALGYGAVETLLIADETLREGREKGEDIDKLLMEVEQAQGKVVVFSTAFEPGEKLHKLGGIAALLRFKVTG</sequence>
<gene>
    <name evidence="1" type="primary">pelA</name>
    <name type="ordered locus">MM_1815</name>
</gene>
<comment type="function">
    <text evidence="1">May function in recognizing stalled ribosomes, interact with stem-loop structures in stalled mRNA molecules, and effect endonucleolytic cleavage of the mRNA. May play a role in the release non-functional ribosomes and degradation of damaged mRNAs. Has endoribonuclease activity.</text>
</comment>
<comment type="cofactor">
    <cofactor evidence="1">
        <name>a divalent metal cation</name>
        <dbReference type="ChEBI" id="CHEBI:60240"/>
    </cofactor>
</comment>
<comment type="subunit">
    <text evidence="1">Monomer.</text>
</comment>
<comment type="subcellular location">
    <subcellularLocation>
        <location evidence="1">Cytoplasm</location>
    </subcellularLocation>
</comment>
<comment type="domain">
    <text evidence="1">The N-terminal domain has the RNA-binding Sm fold. It harbors the endoribonuclease activity.</text>
</comment>
<comment type="similarity">
    <text evidence="1">Belongs to the eukaryotic release factor 1 family. Pelota subfamily.</text>
</comment>
<keyword id="KW-0963">Cytoplasm</keyword>
<keyword id="KW-0255">Endonuclease</keyword>
<keyword id="KW-0378">Hydrolase</keyword>
<keyword id="KW-0479">Metal-binding</keyword>
<keyword id="KW-0540">Nuclease</keyword>
<feature type="chain" id="PRO_0000361807" description="Protein pelota homolog">
    <location>
        <begin position="1"/>
        <end position="350"/>
    </location>
</feature>
<proteinExistence type="inferred from homology"/>
<evidence type="ECO:0000255" key="1">
    <source>
        <dbReference type="HAMAP-Rule" id="MF_01853"/>
    </source>
</evidence>
<accession>Q8PVZ0</accession>
<organism>
    <name type="scientific">Methanosarcina mazei (strain ATCC BAA-159 / DSM 3647 / Goe1 / Go1 / JCM 11833 / OCM 88)</name>
    <name type="common">Methanosarcina frisia</name>
    <dbReference type="NCBI Taxonomy" id="192952"/>
    <lineage>
        <taxon>Archaea</taxon>
        <taxon>Methanobacteriati</taxon>
        <taxon>Methanobacteriota</taxon>
        <taxon>Stenosarchaea group</taxon>
        <taxon>Methanomicrobia</taxon>
        <taxon>Methanosarcinales</taxon>
        <taxon>Methanosarcinaceae</taxon>
        <taxon>Methanosarcina</taxon>
    </lineage>
</organism>